<name>KEX1_LACTC</name>
<accession>C5DLM9</accession>
<comment type="function">
    <text evidence="1">Protease with a carboxypeptidase B-like function involved in the C-terminal processing of the lysine and arginine residues from protein precursors. Promotes cell fusion and is involved in the programmed cell death (By similarity).</text>
</comment>
<comment type="catalytic activity">
    <reaction>
        <text>Preferential release of a C-terminal arginine or lysine residue.</text>
        <dbReference type="EC" id="3.4.16.6"/>
    </reaction>
</comment>
<comment type="subcellular location">
    <subcellularLocation>
        <location evidence="1">Golgi apparatus</location>
        <location evidence="1">trans-Golgi network membrane</location>
        <topology evidence="1">Single-pass type I membrane protein</topology>
    </subcellularLocation>
</comment>
<comment type="similarity">
    <text evidence="4">Belongs to the peptidase S10 family.</text>
</comment>
<evidence type="ECO:0000250" key="1"/>
<evidence type="ECO:0000255" key="2"/>
<evidence type="ECO:0000256" key="3">
    <source>
        <dbReference type="SAM" id="MobiDB-lite"/>
    </source>
</evidence>
<evidence type="ECO:0000305" key="4"/>
<gene>
    <name type="primary">KEX1</name>
    <name type="ordered locus">KLTH0G01980g</name>
</gene>
<sequence>MSHFKYRNQTTDICNAAALDAFAMYSNYSVPLALLFALLLSFQTARALKAADEYAVSPDLIPGLSQAEDRALVPTMHAGHIPLDENNDEHTKNYFFWKFHDESGSASGPARDTLIFWLNGGPGCSSMDGALMESGALRIDSDGKAYLNRGGWHTRGDIVFVDQPAGTGFSTVASDNDYDNDLKVVSEHFVAFLRNYFQVFPDDAGKQVVFAGESYAGQFIPYFARAVLDQDEVQVNLQALLIGNGWIDPNQQSLYYIPFAVEKGLITQDDPSFSYLLKQQENCQNKINSKENDRFSFKECENILNNLLEVTRKIKDSEGKKVPSDQQCINMYDLRLKDSYPSCGMNWPQDLPNLGKFFGTEGVLEALHLDPEHVSQWHECDDKVSNYLKNPDSRASAAILPGLLEAGLEVMLFNGDQDIICNNMGVEAVISQMSWGGETGFSENVQLYDWVYRSPENSEITPAGFVKYDRNLTFMSVYNASHMVPFDNALVSRGVVDLFLNDVDLVQIDGRDTLITDDVNKGKDGDASETDDTTELDCEGKDKLSEECKQLNASKGQNGESDKDEGEKGNEEDDNDDTEDGKKDAGDEKDDGEKDDDEKDGDEKDGDEKDEEDDDDKDENEKDEEDDDKDGDKPEGKNNDGAEDEDDDHNSGSHLAVTMICLLVSGTIIGGLYFTFRDRFRPRLRAILVDPTNRSEASKKTVSWAADLEQDAADLSNPENGAKKKGPYTSVPTQESRDSFELDNL</sequence>
<keyword id="KW-0053">Apoptosis</keyword>
<keyword id="KW-0121">Carboxypeptidase</keyword>
<keyword id="KW-0325">Glycoprotein</keyword>
<keyword id="KW-0333">Golgi apparatus</keyword>
<keyword id="KW-0378">Hydrolase</keyword>
<keyword id="KW-0472">Membrane</keyword>
<keyword id="KW-0645">Protease</keyword>
<keyword id="KW-1185">Reference proteome</keyword>
<keyword id="KW-0732">Signal</keyword>
<keyword id="KW-0812">Transmembrane</keyword>
<keyword id="KW-1133">Transmembrane helix</keyword>
<proteinExistence type="inferred from homology"/>
<reference key="1">
    <citation type="journal article" date="2009" name="Genome Res.">
        <title>Comparative genomics of protoploid Saccharomycetaceae.</title>
        <authorList>
            <consortium name="The Genolevures Consortium"/>
            <person name="Souciet J.-L."/>
            <person name="Dujon B."/>
            <person name="Gaillardin C."/>
            <person name="Johnston M."/>
            <person name="Baret P.V."/>
            <person name="Cliften P."/>
            <person name="Sherman D.J."/>
            <person name="Weissenbach J."/>
            <person name="Westhof E."/>
            <person name="Wincker P."/>
            <person name="Jubin C."/>
            <person name="Poulain J."/>
            <person name="Barbe V."/>
            <person name="Segurens B."/>
            <person name="Artiguenave F."/>
            <person name="Anthouard V."/>
            <person name="Vacherie B."/>
            <person name="Val M.-E."/>
            <person name="Fulton R.S."/>
            <person name="Minx P."/>
            <person name="Wilson R."/>
            <person name="Durrens P."/>
            <person name="Jean G."/>
            <person name="Marck C."/>
            <person name="Martin T."/>
            <person name="Nikolski M."/>
            <person name="Rolland T."/>
            <person name="Seret M.-L."/>
            <person name="Casaregola S."/>
            <person name="Despons L."/>
            <person name="Fairhead C."/>
            <person name="Fischer G."/>
            <person name="Lafontaine I."/>
            <person name="Leh V."/>
            <person name="Lemaire M."/>
            <person name="de Montigny J."/>
            <person name="Neuveglise C."/>
            <person name="Thierry A."/>
            <person name="Blanc-Lenfle I."/>
            <person name="Bleykasten C."/>
            <person name="Diffels J."/>
            <person name="Fritsch E."/>
            <person name="Frangeul L."/>
            <person name="Goeffon A."/>
            <person name="Jauniaux N."/>
            <person name="Kachouri-Lafond R."/>
            <person name="Payen C."/>
            <person name="Potier S."/>
            <person name="Pribylova L."/>
            <person name="Ozanne C."/>
            <person name="Richard G.-F."/>
            <person name="Sacerdot C."/>
            <person name="Straub M.-L."/>
            <person name="Talla E."/>
        </authorList>
    </citation>
    <scope>NUCLEOTIDE SEQUENCE [LARGE SCALE GENOMIC DNA]</scope>
    <source>
        <strain>ATCC 56472 / CBS 6340 / NRRL Y-8284</strain>
    </source>
</reference>
<organism>
    <name type="scientific">Lachancea thermotolerans (strain ATCC 56472 / CBS 6340 / NRRL Y-8284)</name>
    <name type="common">Yeast</name>
    <name type="synonym">Kluyveromyces thermotolerans</name>
    <dbReference type="NCBI Taxonomy" id="559295"/>
    <lineage>
        <taxon>Eukaryota</taxon>
        <taxon>Fungi</taxon>
        <taxon>Dikarya</taxon>
        <taxon>Ascomycota</taxon>
        <taxon>Saccharomycotina</taxon>
        <taxon>Saccharomycetes</taxon>
        <taxon>Saccharomycetales</taxon>
        <taxon>Saccharomycetaceae</taxon>
        <taxon>Lachancea</taxon>
    </lineage>
</organism>
<protein>
    <recommendedName>
        <fullName>Pheromone-processing carboxypeptidase KEX1</fullName>
        <ecNumber>3.4.16.6</ecNumber>
    </recommendedName>
    <alternativeName>
        <fullName>Carboxypeptidase D</fullName>
    </alternativeName>
</protein>
<dbReference type="EC" id="3.4.16.6"/>
<dbReference type="EMBL" id="CU928171">
    <property type="protein sequence ID" value="CAR24690.1"/>
    <property type="molecule type" value="Genomic_DNA"/>
</dbReference>
<dbReference type="RefSeq" id="XP_002555127.1">
    <property type="nucleotide sequence ID" value="XM_002555081.1"/>
</dbReference>
<dbReference type="SMR" id="C5DLM9"/>
<dbReference type="FunCoup" id="C5DLM9">
    <property type="interactions" value="128"/>
</dbReference>
<dbReference type="STRING" id="559295.C5DLM9"/>
<dbReference type="ESTHER" id="lactc-kex1">
    <property type="family name" value="Carboxypeptidase_S10"/>
</dbReference>
<dbReference type="MEROPS" id="S10.007"/>
<dbReference type="GlyCosmos" id="C5DLM9">
    <property type="glycosylation" value="3 sites, No reported glycans"/>
</dbReference>
<dbReference type="GeneID" id="8293386"/>
<dbReference type="KEGG" id="lth:KLTH0G01980g"/>
<dbReference type="eggNOG" id="KOG1282">
    <property type="taxonomic scope" value="Eukaryota"/>
</dbReference>
<dbReference type="HOGENOM" id="CLU_008523_11_2_1"/>
<dbReference type="InParanoid" id="C5DLM9"/>
<dbReference type="OMA" id="NAHENCQ"/>
<dbReference type="OrthoDB" id="443318at2759"/>
<dbReference type="Proteomes" id="UP000002036">
    <property type="component" value="Chromosome G"/>
</dbReference>
<dbReference type="GO" id="GO:0016020">
    <property type="term" value="C:membrane"/>
    <property type="evidence" value="ECO:0007669"/>
    <property type="project" value="UniProtKB-KW"/>
</dbReference>
<dbReference type="GO" id="GO:0005802">
    <property type="term" value="C:trans-Golgi network"/>
    <property type="evidence" value="ECO:0007669"/>
    <property type="project" value="TreeGrafter"/>
</dbReference>
<dbReference type="GO" id="GO:0004185">
    <property type="term" value="F:serine-type carboxypeptidase activity"/>
    <property type="evidence" value="ECO:0007669"/>
    <property type="project" value="UniProtKB-EC"/>
</dbReference>
<dbReference type="GO" id="GO:0006915">
    <property type="term" value="P:apoptotic process"/>
    <property type="evidence" value="ECO:0007669"/>
    <property type="project" value="UniProtKB-KW"/>
</dbReference>
<dbReference type="GO" id="GO:0006508">
    <property type="term" value="P:proteolysis"/>
    <property type="evidence" value="ECO:0007669"/>
    <property type="project" value="UniProtKB-KW"/>
</dbReference>
<dbReference type="Gene3D" id="3.40.50.1820">
    <property type="entry name" value="alpha/beta hydrolase"/>
    <property type="match status" value="1"/>
</dbReference>
<dbReference type="InterPro" id="IPR029058">
    <property type="entry name" value="AB_hydrolase_fold"/>
</dbReference>
<dbReference type="InterPro" id="IPR001563">
    <property type="entry name" value="Peptidase_S10"/>
</dbReference>
<dbReference type="PANTHER" id="PTHR11802:SF190">
    <property type="entry name" value="PHEROMONE-PROCESSING CARBOXYPEPTIDASE KEX1"/>
    <property type="match status" value="1"/>
</dbReference>
<dbReference type="PANTHER" id="PTHR11802">
    <property type="entry name" value="SERINE PROTEASE FAMILY S10 SERINE CARBOXYPEPTIDASE"/>
    <property type="match status" value="1"/>
</dbReference>
<dbReference type="Pfam" id="PF00450">
    <property type="entry name" value="Peptidase_S10"/>
    <property type="match status" value="1"/>
</dbReference>
<dbReference type="PRINTS" id="PR00724">
    <property type="entry name" value="CRBOXYPTASEC"/>
</dbReference>
<dbReference type="SUPFAM" id="SSF53474">
    <property type="entry name" value="alpha/beta-Hydrolases"/>
    <property type="match status" value="1"/>
</dbReference>
<feature type="signal peptide" evidence="2">
    <location>
        <begin position="1"/>
        <end position="47"/>
    </location>
</feature>
<feature type="chain" id="PRO_0000411922" description="Pheromone-processing carboxypeptidase KEX1">
    <location>
        <begin position="48"/>
        <end position="745"/>
    </location>
</feature>
<feature type="topological domain" description="Lumenal" evidence="2">
    <location>
        <begin position="48"/>
        <end position="655"/>
    </location>
</feature>
<feature type="transmembrane region" description="Helical" evidence="2">
    <location>
        <begin position="656"/>
        <end position="676"/>
    </location>
</feature>
<feature type="topological domain" description="Cytoplasmic" evidence="2">
    <location>
        <begin position="677"/>
        <end position="745"/>
    </location>
</feature>
<feature type="region of interest" description="Disordered" evidence="3">
    <location>
        <begin position="515"/>
        <end position="651"/>
    </location>
</feature>
<feature type="region of interest" description="Disordered" evidence="3">
    <location>
        <begin position="709"/>
        <end position="745"/>
    </location>
</feature>
<feature type="compositionally biased region" description="Basic and acidic residues" evidence="3">
    <location>
        <begin position="515"/>
        <end position="526"/>
    </location>
</feature>
<feature type="compositionally biased region" description="Acidic residues" evidence="3">
    <location>
        <begin position="527"/>
        <end position="537"/>
    </location>
</feature>
<feature type="compositionally biased region" description="Basic and acidic residues" evidence="3">
    <location>
        <begin position="538"/>
        <end position="549"/>
    </location>
</feature>
<feature type="compositionally biased region" description="Acidic residues" evidence="3">
    <location>
        <begin position="570"/>
        <end position="579"/>
    </location>
</feature>
<feature type="compositionally biased region" description="Acidic residues" evidence="3">
    <location>
        <begin position="587"/>
        <end position="629"/>
    </location>
</feature>
<feature type="compositionally biased region" description="Basic and acidic residues" evidence="3">
    <location>
        <begin position="630"/>
        <end position="640"/>
    </location>
</feature>
<feature type="compositionally biased region" description="Basic and acidic residues" evidence="3">
    <location>
        <begin position="735"/>
        <end position="745"/>
    </location>
</feature>
<feature type="active site" evidence="1">
    <location>
        <position position="214"/>
    </location>
</feature>
<feature type="active site" evidence="1">
    <location>
        <position position="418"/>
    </location>
</feature>
<feature type="active site" evidence="1">
    <location>
        <position position="482"/>
    </location>
</feature>
<feature type="glycosylation site" description="N-linked (GlcNAc...) asparagine" evidence="2">
    <location>
        <position position="471"/>
    </location>
</feature>
<feature type="glycosylation site" description="N-linked (GlcNAc...) asparagine" evidence="2">
    <location>
        <position position="479"/>
    </location>
</feature>
<feature type="glycosylation site" description="N-linked (GlcNAc...) asparagine" evidence="2">
    <location>
        <position position="552"/>
    </location>
</feature>